<proteinExistence type="inferred from homology"/>
<comment type="function">
    <text evidence="1">Peptide chain release factor 1 directs the termination of translation in response to the peptide chain termination codons UAG and UAA.</text>
</comment>
<comment type="subcellular location">
    <subcellularLocation>
        <location evidence="1">Cytoplasm</location>
    </subcellularLocation>
</comment>
<comment type="PTM">
    <text evidence="1">Methylated by PrmC. Methylation increases the termination efficiency of RF1.</text>
</comment>
<comment type="similarity">
    <text evidence="1">Belongs to the prokaryotic/mitochondrial release factor family.</text>
</comment>
<organism>
    <name type="scientific">Streptococcus pneumoniae (strain ATCC BAA-255 / R6)</name>
    <dbReference type="NCBI Taxonomy" id="171101"/>
    <lineage>
        <taxon>Bacteria</taxon>
        <taxon>Bacillati</taxon>
        <taxon>Bacillota</taxon>
        <taxon>Bacilli</taxon>
        <taxon>Lactobacillales</taxon>
        <taxon>Streptococcaceae</taxon>
        <taxon>Streptococcus</taxon>
    </lineage>
</organism>
<evidence type="ECO:0000255" key="1">
    <source>
        <dbReference type="HAMAP-Rule" id="MF_00093"/>
    </source>
</evidence>
<protein>
    <recommendedName>
        <fullName evidence="1">Peptide chain release factor 1</fullName>
        <shortName evidence="1">RF-1</shortName>
    </recommendedName>
</protein>
<dbReference type="EMBL" id="AE007317">
    <property type="protein sequence ID" value="AAK99728.1"/>
    <property type="molecule type" value="Genomic_DNA"/>
</dbReference>
<dbReference type="PIR" id="D97987">
    <property type="entry name" value="D97987"/>
</dbReference>
<dbReference type="RefSeq" id="NP_358518.1">
    <property type="nucleotide sequence ID" value="NC_003098.1"/>
</dbReference>
<dbReference type="RefSeq" id="WP_001028801.1">
    <property type="nucleotide sequence ID" value="NC_003098.1"/>
</dbReference>
<dbReference type="SMR" id="Q8DPZ4"/>
<dbReference type="STRING" id="171101.spr0924"/>
<dbReference type="GeneID" id="45653642"/>
<dbReference type="KEGG" id="spr:spr0924"/>
<dbReference type="PATRIC" id="fig|171101.6.peg.1011"/>
<dbReference type="eggNOG" id="COG0216">
    <property type="taxonomic scope" value="Bacteria"/>
</dbReference>
<dbReference type="HOGENOM" id="CLU_036856_0_1_9"/>
<dbReference type="Proteomes" id="UP000000586">
    <property type="component" value="Chromosome"/>
</dbReference>
<dbReference type="GO" id="GO:0005737">
    <property type="term" value="C:cytoplasm"/>
    <property type="evidence" value="ECO:0007669"/>
    <property type="project" value="UniProtKB-SubCell"/>
</dbReference>
<dbReference type="GO" id="GO:0016149">
    <property type="term" value="F:translation release factor activity, codon specific"/>
    <property type="evidence" value="ECO:0007669"/>
    <property type="project" value="UniProtKB-UniRule"/>
</dbReference>
<dbReference type="FunFam" id="3.30.160.20:FF:000027">
    <property type="entry name" value="Peptide chain release factor 1"/>
    <property type="match status" value="1"/>
</dbReference>
<dbReference type="FunFam" id="3.30.70.1660:FF:000002">
    <property type="entry name" value="Peptide chain release factor 1"/>
    <property type="match status" value="1"/>
</dbReference>
<dbReference type="FunFam" id="3.30.70.1660:FF:000004">
    <property type="entry name" value="Peptide chain release factor 1"/>
    <property type="match status" value="1"/>
</dbReference>
<dbReference type="Gene3D" id="3.30.160.20">
    <property type="match status" value="1"/>
</dbReference>
<dbReference type="Gene3D" id="3.30.70.1660">
    <property type="match status" value="2"/>
</dbReference>
<dbReference type="Gene3D" id="6.10.140.1950">
    <property type="match status" value="1"/>
</dbReference>
<dbReference type="HAMAP" id="MF_00093">
    <property type="entry name" value="Rel_fac_1"/>
    <property type="match status" value="1"/>
</dbReference>
<dbReference type="InterPro" id="IPR005139">
    <property type="entry name" value="PCRF"/>
</dbReference>
<dbReference type="InterPro" id="IPR000352">
    <property type="entry name" value="Pep_chain_release_fac_I"/>
</dbReference>
<dbReference type="InterPro" id="IPR045853">
    <property type="entry name" value="Pep_chain_release_fac_I_sf"/>
</dbReference>
<dbReference type="InterPro" id="IPR050057">
    <property type="entry name" value="Prokaryotic/Mito_RF"/>
</dbReference>
<dbReference type="InterPro" id="IPR004373">
    <property type="entry name" value="RF-1"/>
</dbReference>
<dbReference type="NCBIfam" id="TIGR00019">
    <property type="entry name" value="prfA"/>
    <property type="match status" value="1"/>
</dbReference>
<dbReference type="NCBIfam" id="NF001859">
    <property type="entry name" value="PRK00591.1"/>
    <property type="match status" value="1"/>
</dbReference>
<dbReference type="PANTHER" id="PTHR43804">
    <property type="entry name" value="LD18447P"/>
    <property type="match status" value="1"/>
</dbReference>
<dbReference type="PANTHER" id="PTHR43804:SF7">
    <property type="entry name" value="LD18447P"/>
    <property type="match status" value="1"/>
</dbReference>
<dbReference type="Pfam" id="PF03462">
    <property type="entry name" value="PCRF"/>
    <property type="match status" value="1"/>
</dbReference>
<dbReference type="Pfam" id="PF00472">
    <property type="entry name" value="RF-1"/>
    <property type="match status" value="1"/>
</dbReference>
<dbReference type="SMART" id="SM00937">
    <property type="entry name" value="PCRF"/>
    <property type="match status" value="1"/>
</dbReference>
<dbReference type="SUPFAM" id="SSF75620">
    <property type="entry name" value="Release factor"/>
    <property type="match status" value="1"/>
</dbReference>
<dbReference type="PROSITE" id="PS00745">
    <property type="entry name" value="RF_PROK_I"/>
    <property type="match status" value="1"/>
</dbReference>
<gene>
    <name evidence="1" type="primary">prfA</name>
    <name type="ordered locus">spr0924</name>
</gene>
<name>RF1_STRR6</name>
<sequence length="359" mass="40630">MNIYDQLQAVEDRYEELGELLSDPDVVSDTKRFMELSKEEASNRDTVIAYREYKQVLQNIVDAEEMIKESGGDADLEEMAKQELKDAKAEKEEYEEKLKILLLPKDPNDDKNIILEIRGAAGGDEAALFAGDLLTMYQKYAEAQGWRFEVMEASMNGVGGFKEVVAMVSGQSVYSKLKYESGAHRVQRVPVTESQGRVHTSTATVLVMPEVEEVEYDIDPKDLRVDIYHASGAGGQNVNKVATAVRIVHLPTNIKVEMQEERTQQKNREKAMKIIRARVADHFAQIAQDEQDAERKSTIGTGDRSERIRTYNFPQNRVTDHRIGLTLQKLDTILSGKLDEVVDALVLYDQTQKLEELNK</sequence>
<reference key="1">
    <citation type="journal article" date="2001" name="J. Bacteriol.">
        <title>Genome of the bacterium Streptococcus pneumoniae strain R6.</title>
        <authorList>
            <person name="Hoskins J."/>
            <person name="Alborn W.E. Jr."/>
            <person name="Arnold J."/>
            <person name="Blaszczak L.C."/>
            <person name="Burgett S."/>
            <person name="DeHoff B.S."/>
            <person name="Estrem S.T."/>
            <person name="Fritz L."/>
            <person name="Fu D.-J."/>
            <person name="Fuller W."/>
            <person name="Geringer C."/>
            <person name="Gilmour R."/>
            <person name="Glass J.S."/>
            <person name="Khoja H."/>
            <person name="Kraft A.R."/>
            <person name="Lagace R.E."/>
            <person name="LeBlanc D.J."/>
            <person name="Lee L.N."/>
            <person name="Lefkowitz E.J."/>
            <person name="Lu J."/>
            <person name="Matsushima P."/>
            <person name="McAhren S.M."/>
            <person name="McHenney M."/>
            <person name="McLeaster K."/>
            <person name="Mundy C.W."/>
            <person name="Nicas T.I."/>
            <person name="Norris F.H."/>
            <person name="O'Gara M."/>
            <person name="Peery R.B."/>
            <person name="Robertson G.T."/>
            <person name="Rockey P."/>
            <person name="Sun P.-M."/>
            <person name="Winkler M.E."/>
            <person name="Yang Y."/>
            <person name="Young-Bellido M."/>
            <person name="Zhao G."/>
            <person name="Zook C.A."/>
            <person name="Baltz R.H."/>
            <person name="Jaskunas S.R."/>
            <person name="Rosteck P.R. Jr."/>
            <person name="Skatrud P.L."/>
            <person name="Glass J.I."/>
        </authorList>
    </citation>
    <scope>NUCLEOTIDE SEQUENCE [LARGE SCALE GENOMIC DNA]</scope>
    <source>
        <strain>ATCC BAA-255 / R6</strain>
    </source>
</reference>
<keyword id="KW-0963">Cytoplasm</keyword>
<keyword id="KW-0488">Methylation</keyword>
<keyword id="KW-0648">Protein biosynthesis</keyword>
<keyword id="KW-1185">Reference proteome</keyword>
<feature type="chain" id="PRO_0000177753" description="Peptide chain release factor 1">
    <location>
        <begin position="1"/>
        <end position="359"/>
    </location>
</feature>
<feature type="modified residue" description="N5-methylglutamine" evidence="1">
    <location>
        <position position="236"/>
    </location>
</feature>
<accession>Q8DPZ4</accession>